<reference key="1">
    <citation type="journal article" date="2006" name="Proc. Natl. Acad. Sci. U.S.A.">
        <title>Comparative genomics of the lactic acid bacteria.</title>
        <authorList>
            <person name="Makarova K.S."/>
            <person name="Slesarev A."/>
            <person name="Wolf Y.I."/>
            <person name="Sorokin A."/>
            <person name="Mirkin B."/>
            <person name="Koonin E.V."/>
            <person name="Pavlov A."/>
            <person name="Pavlova N."/>
            <person name="Karamychev V."/>
            <person name="Polouchine N."/>
            <person name="Shakhova V."/>
            <person name="Grigoriev I."/>
            <person name="Lou Y."/>
            <person name="Rohksar D."/>
            <person name="Lucas S."/>
            <person name="Huang K."/>
            <person name="Goodstein D.M."/>
            <person name="Hawkins T."/>
            <person name="Plengvidhya V."/>
            <person name="Welker D."/>
            <person name="Hughes J."/>
            <person name="Goh Y."/>
            <person name="Benson A."/>
            <person name="Baldwin K."/>
            <person name="Lee J.-H."/>
            <person name="Diaz-Muniz I."/>
            <person name="Dosti B."/>
            <person name="Smeianov V."/>
            <person name="Wechter W."/>
            <person name="Barabote R."/>
            <person name="Lorca G."/>
            <person name="Altermann E."/>
            <person name="Barrangou R."/>
            <person name="Ganesan B."/>
            <person name="Xie Y."/>
            <person name="Rawsthorne H."/>
            <person name="Tamir D."/>
            <person name="Parker C."/>
            <person name="Breidt F."/>
            <person name="Broadbent J.R."/>
            <person name="Hutkins R."/>
            <person name="O'Sullivan D."/>
            <person name="Steele J."/>
            <person name="Unlu G."/>
            <person name="Saier M.H. Jr."/>
            <person name="Klaenhammer T."/>
            <person name="Richardson P."/>
            <person name="Kozyavkin S."/>
            <person name="Weimer B.C."/>
            <person name="Mills D.A."/>
        </authorList>
    </citation>
    <scope>NUCLEOTIDE SEQUENCE [LARGE SCALE GENOMIC DNA]</scope>
    <source>
        <strain>ATCC 33323 / DSM 20243 / BCRC 14619 / CIP 102991 / JCM 1131 / KCTC 3163 / NCIMB 11718 / NCTC 13722 / AM63</strain>
    </source>
</reference>
<protein>
    <recommendedName>
        <fullName evidence="1">N-acetylmuramic acid 6-phosphate etherase</fullName>
        <shortName evidence="1">MurNAc-6-P etherase</shortName>
        <ecNumber evidence="1">4.2.1.126</ecNumber>
    </recommendedName>
    <alternativeName>
        <fullName evidence="1">N-acetylmuramic acid 6-phosphate hydrolase</fullName>
    </alternativeName>
    <alternativeName>
        <fullName evidence="1">N-acetylmuramic acid 6-phosphate lyase</fullName>
    </alternativeName>
</protein>
<sequence>MEIKNLTTEQRNPATMHIDSMSTIDMVKTINKEDQKVAVAVGTQDDKIAQAIDEAAKRYSKGGRLIYIGAGTSGRLGVLDAAELVPTYGIKPERAIGLIAGGKGAMYVAVEGAEDSQDLAKRDLKDLKLNKNDIVLGLAASGRTPYVIGGLDYAKAIGALTISIACVKDSKIGHHADIAIEAVVGPEAITGSTRMKAGTAQKMILNMISTGVMIKQGKVFENVMIDVKPTNSKLIDRACRIIQTTTGVSTPEARNTLEKANNDVGLAIVMLKTNSDLNQAKNLLKAENGNVAEVLNK</sequence>
<organism>
    <name type="scientific">Lactobacillus gasseri (strain ATCC 33323 / DSM 20243 / BCRC 14619 / CIP 102991 / JCM 1131 / KCTC 3163 / NCIMB 11718 / NCTC 13722 / AM63)</name>
    <dbReference type="NCBI Taxonomy" id="324831"/>
    <lineage>
        <taxon>Bacteria</taxon>
        <taxon>Bacillati</taxon>
        <taxon>Bacillota</taxon>
        <taxon>Bacilli</taxon>
        <taxon>Lactobacillales</taxon>
        <taxon>Lactobacillaceae</taxon>
        <taxon>Lactobacillus</taxon>
    </lineage>
</organism>
<keyword id="KW-0119">Carbohydrate metabolism</keyword>
<keyword id="KW-0456">Lyase</keyword>
<accession>Q040J1</accession>
<comment type="function">
    <text evidence="1">Specifically catalyzes the cleavage of the D-lactyl ether substituent of MurNAc 6-phosphate, producing GlcNAc 6-phosphate and D-lactate.</text>
</comment>
<comment type="catalytic activity">
    <reaction evidence="1">
        <text>N-acetyl-D-muramate 6-phosphate + H2O = N-acetyl-D-glucosamine 6-phosphate + (R)-lactate</text>
        <dbReference type="Rhea" id="RHEA:26410"/>
        <dbReference type="ChEBI" id="CHEBI:15377"/>
        <dbReference type="ChEBI" id="CHEBI:16004"/>
        <dbReference type="ChEBI" id="CHEBI:57513"/>
        <dbReference type="ChEBI" id="CHEBI:58722"/>
        <dbReference type="EC" id="4.2.1.126"/>
    </reaction>
</comment>
<comment type="pathway">
    <text evidence="1">Amino-sugar metabolism; N-acetylmuramate degradation.</text>
</comment>
<comment type="subunit">
    <text evidence="1">Homodimer.</text>
</comment>
<comment type="miscellaneous">
    <text evidence="1">A lyase-type mechanism (elimination/hydration) is suggested for the cleavage of the lactyl ether bond of MurNAc 6-phosphate, with the formation of an alpha,beta-unsaturated aldehyde intermediate with (E)-stereochemistry, followed by the syn addition of water to give product.</text>
</comment>
<comment type="similarity">
    <text evidence="1">Belongs to the GCKR-like family. MurNAc-6-P etherase subfamily.</text>
</comment>
<name>MURQ_LACGA</name>
<gene>
    <name evidence="1" type="primary">murQ</name>
    <name type="ordered locus">LGAS_1857</name>
</gene>
<feature type="chain" id="PRO_1000009121" description="N-acetylmuramic acid 6-phosphate etherase">
    <location>
        <begin position="1"/>
        <end position="297"/>
    </location>
</feature>
<feature type="domain" description="SIS" evidence="1">
    <location>
        <begin position="55"/>
        <end position="218"/>
    </location>
</feature>
<feature type="active site" description="Proton donor" evidence="1">
    <location>
        <position position="83"/>
    </location>
</feature>
<feature type="active site" evidence="1">
    <location>
        <position position="114"/>
    </location>
</feature>
<dbReference type="EC" id="4.2.1.126" evidence="1"/>
<dbReference type="EMBL" id="CP000413">
    <property type="protein sequence ID" value="ABJ61131.1"/>
    <property type="molecule type" value="Genomic_DNA"/>
</dbReference>
<dbReference type="RefSeq" id="WP_003648170.1">
    <property type="nucleotide sequence ID" value="NZ_WBMG01000006.1"/>
</dbReference>
<dbReference type="SMR" id="Q040J1"/>
<dbReference type="GeneID" id="29639171"/>
<dbReference type="KEGG" id="lga:LGAS_1857"/>
<dbReference type="HOGENOM" id="CLU_049049_1_1_9"/>
<dbReference type="BioCyc" id="LGAS324831:G1G6Y-1850-MONOMER"/>
<dbReference type="UniPathway" id="UPA00342"/>
<dbReference type="Proteomes" id="UP000000664">
    <property type="component" value="Chromosome"/>
</dbReference>
<dbReference type="GO" id="GO:0097367">
    <property type="term" value="F:carbohydrate derivative binding"/>
    <property type="evidence" value="ECO:0007669"/>
    <property type="project" value="InterPro"/>
</dbReference>
<dbReference type="GO" id="GO:0016835">
    <property type="term" value="F:carbon-oxygen lyase activity"/>
    <property type="evidence" value="ECO:0007669"/>
    <property type="project" value="UniProtKB-UniRule"/>
</dbReference>
<dbReference type="GO" id="GO:0016803">
    <property type="term" value="F:ether hydrolase activity"/>
    <property type="evidence" value="ECO:0007669"/>
    <property type="project" value="TreeGrafter"/>
</dbReference>
<dbReference type="GO" id="GO:0046348">
    <property type="term" value="P:amino sugar catabolic process"/>
    <property type="evidence" value="ECO:0007669"/>
    <property type="project" value="InterPro"/>
</dbReference>
<dbReference type="GO" id="GO:0097173">
    <property type="term" value="P:N-acetylmuramic acid catabolic process"/>
    <property type="evidence" value="ECO:0007669"/>
    <property type="project" value="UniProtKB-UniPathway"/>
</dbReference>
<dbReference type="GO" id="GO:0009254">
    <property type="term" value="P:peptidoglycan turnover"/>
    <property type="evidence" value="ECO:0007669"/>
    <property type="project" value="TreeGrafter"/>
</dbReference>
<dbReference type="CDD" id="cd05007">
    <property type="entry name" value="SIS_Etherase"/>
    <property type="match status" value="1"/>
</dbReference>
<dbReference type="FunFam" id="3.40.50.10490:FF:000014">
    <property type="entry name" value="N-acetylmuramic acid 6-phosphate etherase"/>
    <property type="match status" value="1"/>
</dbReference>
<dbReference type="Gene3D" id="1.10.8.1080">
    <property type="match status" value="1"/>
</dbReference>
<dbReference type="Gene3D" id="3.40.50.10490">
    <property type="entry name" value="Glucose-6-phosphate isomerase like protein, domain 1"/>
    <property type="match status" value="1"/>
</dbReference>
<dbReference type="HAMAP" id="MF_00068">
    <property type="entry name" value="MurQ"/>
    <property type="match status" value="1"/>
</dbReference>
<dbReference type="InterPro" id="IPR005488">
    <property type="entry name" value="Etherase_MurQ"/>
</dbReference>
<dbReference type="InterPro" id="IPR005486">
    <property type="entry name" value="Glucokinase_regulatory_CS"/>
</dbReference>
<dbReference type="InterPro" id="IPR040190">
    <property type="entry name" value="MURQ/GCKR"/>
</dbReference>
<dbReference type="InterPro" id="IPR001347">
    <property type="entry name" value="SIS_dom"/>
</dbReference>
<dbReference type="InterPro" id="IPR046348">
    <property type="entry name" value="SIS_dom_sf"/>
</dbReference>
<dbReference type="NCBIfam" id="TIGR00274">
    <property type="entry name" value="N-acetylmuramic acid 6-phosphate etherase"/>
    <property type="match status" value="1"/>
</dbReference>
<dbReference type="NCBIfam" id="NF003915">
    <property type="entry name" value="PRK05441.1"/>
    <property type="match status" value="1"/>
</dbReference>
<dbReference type="NCBIfam" id="NF009222">
    <property type="entry name" value="PRK12570.1"/>
    <property type="match status" value="1"/>
</dbReference>
<dbReference type="PANTHER" id="PTHR10088">
    <property type="entry name" value="GLUCOKINASE REGULATORY PROTEIN"/>
    <property type="match status" value="1"/>
</dbReference>
<dbReference type="PANTHER" id="PTHR10088:SF4">
    <property type="entry name" value="GLUCOKINASE REGULATORY PROTEIN"/>
    <property type="match status" value="1"/>
</dbReference>
<dbReference type="Pfam" id="PF20741">
    <property type="entry name" value="GKRP-like_C"/>
    <property type="match status" value="1"/>
</dbReference>
<dbReference type="Pfam" id="PF22645">
    <property type="entry name" value="GKRP_SIS_N"/>
    <property type="match status" value="1"/>
</dbReference>
<dbReference type="SUPFAM" id="SSF53697">
    <property type="entry name" value="SIS domain"/>
    <property type="match status" value="1"/>
</dbReference>
<dbReference type="PROSITE" id="PS01272">
    <property type="entry name" value="GCKR"/>
    <property type="match status" value="1"/>
</dbReference>
<dbReference type="PROSITE" id="PS51464">
    <property type="entry name" value="SIS"/>
    <property type="match status" value="1"/>
</dbReference>
<evidence type="ECO:0000255" key="1">
    <source>
        <dbReference type="HAMAP-Rule" id="MF_00068"/>
    </source>
</evidence>
<proteinExistence type="inferred from homology"/>